<comment type="catalytic activity">
    <reaction evidence="1">
        <text>(6R)-10-formyltetrahydrofolate + 5-amino-1-(5-phospho-beta-D-ribosyl)imidazole-4-carboxamide = 5-formamido-1-(5-phospho-D-ribosyl)imidazole-4-carboxamide + (6S)-5,6,7,8-tetrahydrofolate</text>
        <dbReference type="Rhea" id="RHEA:22192"/>
        <dbReference type="ChEBI" id="CHEBI:57453"/>
        <dbReference type="ChEBI" id="CHEBI:58467"/>
        <dbReference type="ChEBI" id="CHEBI:58475"/>
        <dbReference type="ChEBI" id="CHEBI:195366"/>
        <dbReference type="EC" id="2.1.2.3"/>
    </reaction>
</comment>
<comment type="catalytic activity">
    <reaction evidence="1">
        <text>IMP + H2O = 5-formamido-1-(5-phospho-D-ribosyl)imidazole-4-carboxamide</text>
        <dbReference type="Rhea" id="RHEA:18445"/>
        <dbReference type="ChEBI" id="CHEBI:15377"/>
        <dbReference type="ChEBI" id="CHEBI:58053"/>
        <dbReference type="ChEBI" id="CHEBI:58467"/>
        <dbReference type="EC" id="3.5.4.10"/>
    </reaction>
</comment>
<comment type="pathway">
    <text evidence="1">Purine metabolism; IMP biosynthesis via de novo pathway; 5-formamido-1-(5-phospho-D-ribosyl)imidazole-4-carboxamide from 5-amino-1-(5-phospho-D-ribosyl)imidazole-4-carboxamide (10-formyl THF route): step 1/1.</text>
</comment>
<comment type="pathway">
    <text evidence="1">Purine metabolism; IMP biosynthesis via de novo pathway; IMP from 5-formamido-1-(5-phospho-D-ribosyl)imidazole-4-carboxamide: step 1/1.</text>
</comment>
<comment type="domain">
    <text evidence="1">The IMP cyclohydrolase activity resides in the N-terminal region.</text>
</comment>
<comment type="similarity">
    <text evidence="1">Belongs to the PurH family.</text>
</comment>
<proteinExistence type="inferred from homology"/>
<protein>
    <recommendedName>
        <fullName evidence="1">Bifunctional purine biosynthesis protein PurH</fullName>
    </recommendedName>
    <domain>
        <recommendedName>
            <fullName evidence="1">Phosphoribosylaminoimidazolecarboxamide formyltransferase</fullName>
            <ecNumber evidence="1">2.1.2.3</ecNumber>
        </recommendedName>
        <alternativeName>
            <fullName evidence="1">AICAR transformylase</fullName>
        </alternativeName>
    </domain>
    <domain>
        <recommendedName>
            <fullName evidence="1">IMP cyclohydrolase</fullName>
            <ecNumber evidence="1">3.5.4.10</ecNumber>
        </recommendedName>
        <alternativeName>
            <fullName evidence="1">ATIC</fullName>
        </alternativeName>
        <alternativeName>
            <fullName evidence="1">IMP synthase</fullName>
        </alternativeName>
        <alternativeName>
            <fullName evidence="1">Inosinicase</fullName>
        </alternativeName>
    </domain>
</protein>
<accession>Q12IP4</accession>
<reference key="1">
    <citation type="submission" date="2006-03" db="EMBL/GenBank/DDBJ databases">
        <title>Complete sequence of Shewanella denitrificans OS217.</title>
        <authorList>
            <consortium name="US DOE Joint Genome Institute"/>
            <person name="Copeland A."/>
            <person name="Lucas S."/>
            <person name="Lapidus A."/>
            <person name="Barry K."/>
            <person name="Detter J.C."/>
            <person name="Glavina del Rio T."/>
            <person name="Hammon N."/>
            <person name="Israni S."/>
            <person name="Dalin E."/>
            <person name="Tice H."/>
            <person name="Pitluck S."/>
            <person name="Brettin T."/>
            <person name="Bruce D."/>
            <person name="Han C."/>
            <person name="Tapia R."/>
            <person name="Gilna P."/>
            <person name="Kiss H."/>
            <person name="Schmutz J."/>
            <person name="Larimer F."/>
            <person name="Land M."/>
            <person name="Hauser L."/>
            <person name="Kyrpides N."/>
            <person name="Lykidis A."/>
            <person name="Richardson P."/>
        </authorList>
    </citation>
    <scope>NUCLEOTIDE SEQUENCE [LARGE SCALE GENOMIC DNA]</scope>
    <source>
        <strain>OS217 / ATCC BAA-1090 / DSM 15013</strain>
    </source>
</reference>
<keyword id="KW-0378">Hydrolase</keyword>
<keyword id="KW-0511">Multifunctional enzyme</keyword>
<keyword id="KW-0658">Purine biosynthesis</keyword>
<keyword id="KW-1185">Reference proteome</keyword>
<keyword id="KW-0808">Transferase</keyword>
<evidence type="ECO:0000255" key="1">
    <source>
        <dbReference type="HAMAP-Rule" id="MF_00139"/>
    </source>
</evidence>
<evidence type="ECO:0000255" key="2">
    <source>
        <dbReference type="PROSITE-ProRule" id="PRU01202"/>
    </source>
</evidence>
<feature type="chain" id="PRO_1000018951" description="Bifunctional purine biosynthesis protein PurH">
    <location>
        <begin position="1"/>
        <end position="534"/>
    </location>
</feature>
<feature type="domain" description="MGS-like" evidence="2">
    <location>
        <begin position="1"/>
        <end position="148"/>
    </location>
</feature>
<organism>
    <name type="scientific">Shewanella denitrificans (strain OS217 / ATCC BAA-1090 / DSM 15013)</name>
    <dbReference type="NCBI Taxonomy" id="318161"/>
    <lineage>
        <taxon>Bacteria</taxon>
        <taxon>Pseudomonadati</taxon>
        <taxon>Pseudomonadota</taxon>
        <taxon>Gammaproteobacteria</taxon>
        <taxon>Alteromonadales</taxon>
        <taxon>Shewanellaceae</taxon>
        <taxon>Shewanella</taxon>
    </lineage>
</organism>
<dbReference type="EC" id="2.1.2.3" evidence="1"/>
<dbReference type="EC" id="3.5.4.10" evidence="1"/>
<dbReference type="EMBL" id="CP000302">
    <property type="protein sequence ID" value="ABE56682.1"/>
    <property type="molecule type" value="Genomic_DNA"/>
</dbReference>
<dbReference type="RefSeq" id="WP_011497824.1">
    <property type="nucleotide sequence ID" value="NC_007954.1"/>
</dbReference>
<dbReference type="SMR" id="Q12IP4"/>
<dbReference type="STRING" id="318161.Sden_3407"/>
<dbReference type="KEGG" id="sdn:Sden_3407"/>
<dbReference type="eggNOG" id="COG0138">
    <property type="taxonomic scope" value="Bacteria"/>
</dbReference>
<dbReference type="HOGENOM" id="CLU_016316_5_2_6"/>
<dbReference type="OrthoDB" id="9802065at2"/>
<dbReference type="UniPathway" id="UPA00074">
    <property type="reaction ID" value="UER00133"/>
</dbReference>
<dbReference type="UniPathway" id="UPA00074">
    <property type="reaction ID" value="UER00135"/>
</dbReference>
<dbReference type="Proteomes" id="UP000001982">
    <property type="component" value="Chromosome"/>
</dbReference>
<dbReference type="GO" id="GO:0005829">
    <property type="term" value="C:cytosol"/>
    <property type="evidence" value="ECO:0007669"/>
    <property type="project" value="TreeGrafter"/>
</dbReference>
<dbReference type="GO" id="GO:0003937">
    <property type="term" value="F:IMP cyclohydrolase activity"/>
    <property type="evidence" value="ECO:0007669"/>
    <property type="project" value="UniProtKB-UniRule"/>
</dbReference>
<dbReference type="GO" id="GO:0004643">
    <property type="term" value="F:phosphoribosylaminoimidazolecarboxamide formyltransferase activity"/>
    <property type="evidence" value="ECO:0007669"/>
    <property type="project" value="UniProtKB-UniRule"/>
</dbReference>
<dbReference type="GO" id="GO:0006189">
    <property type="term" value="P:'de novo' IMP biosynthetic process"/>
    <property type="evidence" value="ECO:0007669"/>
    <property type="project" value="UniProtKB-UniRule"/>
</dbReference>
<dbReference type="CDD" id="cd01421">
    <property type="entry name" value="IMPCH"/>
    <property type="match status" value="1"/>
</dbReference>
<dbReference type="FunFam" id="3.40.140.20:FF:000001">
    <property type="entry name" value="Bifunctional purine biosynthesis protein PurH"/>
    <property type="match status" value="1"/>
</dbReference>
<dbReference type="FunFam" id="3.40.140.20:FF:000002">
    <property type="entry name" value="Bifunctional purine biosynthesis protein PurH"/>
    <property type="match status" value="1"/>
</dbReference>
<dbReference type="FunFam" id="3.40.50.1380:FF:000001">
    <property type="entry name" value="Bifunctional purine biosynthesis protein PurH"/>
    <property type="match status" value="1"/>
</dbReference>
<dbReference type="Gene3D" id="3.40.140.20">
    <property type="match status" value="2"/>
</dbReference>
<dbReference type="Gene3D" id="3.40.50.1380">
    <property type="entry name" value="Methylglyoxal synthase-like domain"/>
    <property type="match status" value="1"/>
</dbReference>
<dbReference type="HAMAP" id="MF_00139">
    <property type="entry name" value="PurH"/>
    <property type="match status" value="1"/>
</dbReference>
<dbReference type="InterPro" id="IPR024051">
    <property type="entry name" value="AICAR_Tfase_dup_dom_sf"/>
</dbReference>
<dbReference type="InterPro" id="IPR016193">
    <property type="entry name" value="Cytidine_deaminase-like"/>
</dbReference>
<dbReference type="InterPro" id="IPR011607">
    <property type="entry name" value="MGS-like_dom"/>
</dbReference>
<dbReference type="InterPro" id="IPR036914">
    <property type="entry name" value="MGS-like_dom_sf"/>
</dbReference>
<dbReference type="InterPro" id="IPR002695">
    <property type="entry name" value="PurH-like"/>
</dbReference>
<dbReference type="NCBIfam" id="NF002049">
    <property type="entry name" value="PRK00881.1"/>
    <property type="match status" value="1"/>
</dbReference>
<dbReference type="NCBIfam" id="TIGR00355">
    <property type="entry name" value="purH"/>
    <property type="match status" value="1"/>
</dbReference>
<dbReference type="PANTHER" id="PTHR11692:SF0">
    <property type="entry name" value="BIFUNCTIONAL PURINE BIOSYNTHESIS PROTEIN ATIC"/>
    <property type="match status" value="1"/>
</dbReference>
<dbReference type="PANTHER" id="PTHR11692">
    <property type="entry name" value="BIFUNCTIONAL PURINE BIOSYNTHESIS PROTEIN PURH"/>
    <property type="match status" value="1"/>
</dbReference>
<dbReference type="Pfam" id="PF01808">
    <property type="entry name" value="AICARFT_IMPCHas"/>
    <property type="match status" value="1"/>
</dbReference>
<dbReference type="Pfam" id="PF02142">
    <property type="entry name" value="MGS"/>
    <property type="match status" value="1"/>
</dbReference>
<dbReference type="PIRSF" id="PIRSF000414">
    <property type="entry name" value="AICARFT_IMPCHas"/>
    <property type="match status" value="1"/>
</dbReference>
<dbReference type="SMART" id="SM00798">
    <property type="entry name" value="AICARFT_IMPCHas"/>
    <property type="match status" value="1"/>
</dbReference>
<dbReference type="SMART" id="SM00851">
    <property type="entry name" value="MGS"/>
    <property type="match status" value="1"/>
</dbReference>
<dbReference type="SUPFAM" id="SSF53927">
    <property type="entry name" value="Cytidine deaminase-like"/>
    <property type="match status" value="1"/>
</dbReference>
<dbReference type="SUPFAM" id="SSF52335">
    <property type="entry name" value="Methylglyoxal synthase-like"/>
    <property type="match status" value="1"/>
</dbReference>
<dbReference type="PROSITE" id="PS51855">
    <property type="entry name" value="MGS"/>
    <property type="match status" value="1"/>
</dbReference>
<name>PUR9_SHEDO</name>
<gene>
    <name evidence="1" type="primary">purH</name>
    <name type="ordered locus">Sden_3407</name>
</gene>
<sequence>MNTVRPIRRALLSVSDKTGILEFAQALHAHGVELLSTGGTARLLAEHGLPVIEASDHTGHPEIMDGRVKTLHPKIHGGILARRGQDEAVMAENNILPIDLVVVNLYPFASTVANPDCTLADAVENIDIGGPTMVRAAAKNHQDVTIVVNASDYARVLAEMKTNQGSTTLKIRFELAVAAFEHTAAYDGMIANYFGNLVAMDADTSDEQQALHQESSFPRTFNSQFIKKQDLRYGENSHQKAAFYVDPQIDEASVASAIQLQGKALSYNNIADTDAALECVKEFDGPACVIVKHANPCGVALGKDLLDAYNRAYQTDPTSAFGGIIAFNGELDAATASAIVERQFVEVIIAPSVSQAARDIVAAKANVRLLECGKWETKTTSLDYKRVNGGLLVQDRDQGMVGLADIKVVSKRQPTEAELKDLLFCWKVAKFVKSNAIVYAKEGMTIGVGAGQMSRVYSAKIAGIKASDEGLVVENSVMASDAFFPFRDGIDAAAAAGISCIIQPGGSIRDEEIIKAADEHGMAMVFTGMRHFRH</sequence>